<accession>B2A1M7</accession>
<organism>
    <name type="scientific">Natranaerobius thermophilus (strain ATCC BAA-1301 / DSM 18059 / JW/NM-WN-LF)</name>
    <dbReference type="NCBI Taxonomy" id="457570"/>
    <lineage>
        <taxon>Bacteria</taxon>
        <taxon>Bacillati</taxon>
        <taxon>Bacillota</taxon>
        <taxon>Clostridia</taxon>
        <taxon>Natranaerobiales</taxon>
        <taxon>Natranaerobiaceae</taxon>
        <taxon>Natranaerobius</taxon>
    </lineage>
</organism>
<keyword id="KW-1185">Reference proteome</keyword>
<keyword id="KW-0678">Repressor</keyword>
<keyword id="KW-0346">Stress response</keyword>
<keyword id="KW-0804">Transcription</keyword>
<keyword id="KW-0805">Transcription regulation</keyword>
<dbReference type="EMBL" id="CP001034">
    <property type="protein sequence ID" value="ACB84764.1"/>
    <property type="molecule type" value="Genomic_DNA"/>
</dbReference>
<dbReference type="RefSeq" id="WP_012447639.1">
    <property type="nucleotide sequence ID" value="NC_010718.1"/>
</dbReference>
<dbReference type="SMR" id="B2A1M7"/>
<dbReference type="FunCoup" id="B2A1M7">
    <property type="interactions" value="198"/>
</dbReference>
<dbReference type="STRING" id="457570.Nther_1181"/>
<dbReference type="KEGG" id="nth:Nther_1181"/>
<dbReference type="eggNOG" id="COG1420">
    <property type="taxonomic scope" value="Bacteria"/>
</dbReference>
<dbReference type="HOGENOM" id="CLU_050019_1_0_9"/>
<dbReference type="InParanoid" id="B2A1M7"/>
<dbReference type="OrthoDB" id="9783139at2"/>
<dbReference type="Proteomes" id="UP000001683">
    <property type="component" value="Chromosome"/>
</dbReference>
<dbReference type="GO" id="GO:0003677">
    <property type="term" value="F:DNA binding"/>
    <property type="evidence" value="ECO:0007669"/>
    <property type="project" value="InterPro"/>
</dbReference>
<dbReference type="GO" id="GO:0045892">
    <property type="term" value="P:negative regulation of DNA-templated transcription"/>
    <property type="evidence" value="ECO:0007669"/>
    <property type="project" value="UniProtKB-UniRule"/>
</dbReference>
<dbReference type="FunFam" id="1.10.10.10:FF:000049">
    <property type="entry name" value="Heat-inducible transcription repressor HrcA"/>
    <property type="match status" value="1"/>
</dbReference>
<dbReference type="Gene3D" id="3.30.450.40">
    <property type="match status" value="1"/>
</dbReference>
<dbReference type="Gene3D" id="3.30.390.60">
    <property type="entry name" value="Heat-inducible transcription repressor hrca homolog, domain 3"/>
    <property type="match status" value="1"/>
</dbReference>
<dbReference type="Gene3D" id="1.10.10.10">
    <property type="entry name" value="Winged helix-like DNA-binding domain superfamily/Winged helix DNA-binding domain"/>
    <property type="match status" value="1"/>
</dbReference>
<dbReference type="HAMAP" id="MF_00081">
    <property type="entry name" value="HrcA"/>
    <property type="match status" value="1"/>
</dbReference>
<dbReference type="InterPro" id="IPR029016">
    <property type="entry name" value="GAF-like_dom_sf"/>
</dbReference>
<dbReference type="InterPro" id="IPR002571">
    <property type="entry name" value="HrcA"/>
</dbReference>
<dbReference type="InterPro" id="IPR021153">
    <property type="entry name" value="HrcA_C"/>
</dbReference>
<dbReference type="InterPro" id="IPR036388">
    <property type="entry name" value="WH-like_DNA-bd_sf"/>
</dbReference>
<dbReference type="InterPro" id="IPR036390">
    <property type="entry name" value="WH_DNA-bd_sf"/>
</dbReference>
<dbReference type="InterPro" id="IPR023120">
    <property type="entry name" value="WHTH_transcript_rep_HrcA_IDD"/>
</dbReference>
<dbReference type="NCBIfam" id="TIGR00331">
    <property type="entry name" value="hrcA"/>
    <property type="match status" value="1"/>
</dbReference>
<dbReference type="PANTHER" id="PTHR34824">
    <property type="entry name" value="HEAT-INDUCIBLE TRANSCRIPTION REPRESSOR HRCA"/>
    <property type="match status" value="1"/>
</dbReference>
<dbReference type="PANTHER" id="PTHR34824:SF1">
    <property type="entry name" value="HEAT-INDUCIBLE TRANSCRIPTION REPRESSOR HRCA"/>
    <property type="match status" value="1"/>
</dbReference>
<dbReference type="Pfam" id="PF01628">
    <property type="entry name" value="HrcA"/>
    <property type="match status" value="1"/>
</dbReference>
<dbReference type="PIRSF" id="PIRSF005485">
    <property type="entry name" value="HrcA"/>
    <property type="match status" value="1"/>
</dbReference>
<dbReference type="SUPFAM" id="SSF55781">
    <property type="entry name" value="GAF domain-like"/>
    <property type="match status" value="1"/>
</dbReference>
<dbReference type="SUPFAM" id="SSF46785">
    <property type="entry name" value="Winged helix' DNA-binding domain"/>
    <property type="match status" value="1"/>
</dbReference>
<reference key="1">
    <citation type="submission" date="2008-04" db="EMBL/GenBank/DDBJ databases">
        <title>Complete sequence of chromosome of Natranaerobius thermophilus JW/NM-WN-LF.</title>
        <authorList>
            <consortium name="US DOE Joint Genome Institute"/>
            <person name="Copeland A."/>
            <person name="Lucas S."/>
            <person name="Lapidus A."/>
            <person name="Glavina del Rio T."/>
            <person name="Dalin E."/>
            <person name="Tice H."/>
            <person name="Bruce D."/>
            <person name="Goodwin L."/>
            <person name="Pitluck S."/>
            <person name="Chertkov O."/>
            <person name="Brettin T."/>
            <person name="Detter J.C."/>
            <person name="Han C."/>
            <person name="Kuske C.R."/>
            <person name="Schmutz J."/>
            <person name="Larimer F."/>
            <person name="Land M."/>
            <person name="Hauser L."/>
            <person name="Kyrpides N."/>
            <person name="Lykidis A."/>
            <person name="Mesbah N.M."/>
            <person name="Wiegel J."/>
        </authorList>
    </citation>
    <scope>NUCLEOTIDE SEQUENCE [LARGE SCALE GENOMIC DNA]</scope>
    <source>
        <strain>ATCC BAA-1301 / DSM 18059 / JW/NM-WN-LF</strain>
    </source>
</reference>
<protein>
    <recommendedName>
        <fullName evidence="1">Heat-inducible transcription repressor HrcA</fullName>
    </recommendedName>
</protein>
<comment type="function">
    <text evidence="1">Negative regulator of class I heat shock genes (grpE-dnaK-dnaJ and groELS operons). Prevents heat-shock induction of these operons.</text>
</comment>
<comment type="similarity">
    <text evidence="1">Belongs to the HrcA family.</text>
</comment>
<gene>
    <name evidence="1" type="primary">hrcA</name>
    <name type="ordered locus">Nther_1181</name>
</gene>
<sequence length="343" mass="38612">MSLNWRKQKILKTIISDYIKRAEPVGSRTLTKRYEFDLSPATIRNEMADLEDMGFLEQPHTSAGRIPTERGYRFFVDELITRCLSVPQQELLLKKLTKFKALEINEIVQVTARALAEMTDYTSLVLGPQTSKSAFQEIQVFPIDQQRVLMVLTTDTGIIESKPVPVSGNLSKQELSNIVQHLNKRLKGLTIDDITPSLLKELRTDLIKEVDLVEKAMHILADSFRHSSANVALGGTKNILNQPEFNDLKKVKELLSFFENEEVLAELLSESEGIVVRIGKENPRDEVKDCSLVTASYELNGRPLGTIGVLGPTRMDYSRVIAIVAQIANELTMALDKKKITEE</sequence>
<name>HRCA_NATTJ</name>
<feature type="chain" id="PRO_1000092822" description="Heat-inducible transcription repressor HrcA">
    <location>
        <begin position="1"/>
        <end position="343"/>
    </location>
</feature>
<evidence type="ECO:0000255" key="1">
    <source>
        <dbReference type="HAMAP-Rule" id="MF_00081"/>
    </source>
</evidence>
<proteinExistence type="inferred from homology"/>